<reference evidence="3" key="1">
    <citation type="submission" date="2005-03" db="EMBL/GenBank/DDBJ databases">
        <title>Annotation of the Saccharomyces cerevisiae RM11-1a genome.</title>
        <authorList>
            <consortium name="The Broad Institute Genome Sequencing Platform"/>
            <person name="Birren B.W."/>
            <person name="Lander E.S."/>
            <person name="Galagan J.E."/>
            <person name="Nusbaum C."/>
            <person name="Devon K."/>
            <person name="Cuomo C."/>
            <person name="Jaffe D.B."/>
            <person name="Butler J."/>
            <person name="Alvarez P."/>
            <person name="Gnerre S."/>
            <person name="Grabherr M."/>
            <person name="Kleber M."/>
            <person name="Mauceli E.W."/>
            <person name="Brockman W."/>
            <person name="MacCallum I.A."/>
            <person name="Rounsley S."/>
            <person name="Young S.K."/>
            <person name="LaButti K."/>
            <person name="Pushparaj V."/>
            <person name="DeCaprio D."/>
            <person name="Crawford M."/>
            <person name="Koehrsen M."/>
            <person name="Engels R."/>
            <person name="Montgomery P."/>
            <person name="Pearson M."/>
            <person name="Howarth C."/>
            <person name="Larson L."/>
            <person name="Luoma S."/>
            <person name="White J."/>
            <person name="O'Leary S."/>
            <person name="Kodira C.D."/>
            <person name="Zeng Q."/>
            <person name="Yandava C."/>
            <person name="Alvarado L."/>
            <person name="Pratt S."/>
            <person name="Kruglyak L."/>
        </authorList>
    </citation>
    <scope>NUCLEOTIDE SEQUENCE [LARGE SCALE GENOMIC DNA]</scope>
    <source>
        <strain evidence="3">RM11-1a</strain>
    </source>
</reference>
<gene>
    <name evidence="2" type="primary">MET7</name>
    <name type="ORF">SCRG_01625</name>
</gene>
<organism>
    <name type="scientific">Saccharomyces cerevisiae (strain RM11-1a)</name>
    <name type="common">Baker's yeast</name>
    <dbReference type="NCBI Taxonomy" id="285006"/>
    <lineage>
        <taxon>Eukaryota</taxon>
        <taxon>Fungi</taxon>
        <taxon>Dikarya</taxon>
        <taxon>Ascomycota</taxon>
        <taxon>Saccharomycotina</taxon>
        <taxon>Saccharomycetes</taxon>
        <taxon>Saccharomycetales</taxon>
        <taxon>Saccharomycetaceae</taxon>
        <taxon>Saccharomyces</taxon>
    </lineage>
</organism>
<keyword id="KW-0067">ATP-binding</keyword>
<keyword id="KW-0963">Cytoplasm</keyword>
<keyword id="KW-0436">Ligase</keyword>
<keyword id="KW-0460">Magnesium</keyword>
<keyword id="KW-0472">Membrane</keyword>
<keyword id="KW-0479">Metal-binding</keyword>
<keyword id="KW-0496">Mitochondrion</keyword>
<keyword id="KW-0999">Mitochondrion inner membrane</keyword>
<keyword id="KW-0547">Nucleotide-binding</keyword>
<keyword id="KW-0554">One-carbon metabolism</keyword>
<comment type="function">
    <text evidence="2">Catalyzes conversion of folates to polyglutamate derivatives allowing concentration of folate compounds in the cell and the intracellular retention of these cofactors, which are important substrates for most of the folate-dependent enzymes that are involved in one-carbon transfer reactions involved in purine, pyrimidine and amino acid synthesis. Required for methionine synthesis and maintenance of intact mitochondrial DNA. Involved in telomere maintenance (By similarity).</text>
</comment>
<comment type="catalytic activity">
    <reaction evidence="2">
        <text>(6S)-5,6,7,8-tetrahydrofolyl-(gamma-L-Glu)(n) + L-glutamate + ATP = (6S)-5,6,7,8-tetrahydrofolyl-(gamma-L-Glu)(n+1) + ADP + phosphate + H(+)</text>
        <dbReference type="Rhea" id="RHEA:10580"/>
        <dbReference type="Rhea" id="RHEA-COMP:14738"/>
        <dbReference type="Rhea" id="RHEA-COMP:14740"/>
        <dbReference type="ChEBI" id="CHEBI:15378"/>
        <dbReference type="ChEBI" id="CHEBI:29985"/>
        <dbReference type="ChEBI" id="CHEBI:30616"/>
        <dbReference type="ChEBI" id="CHEBI:43474"/>
        <dbReference type="ChEBI" id="CHEBI:141005"/>
        <dbReference type="ChEBI" id="CHEBI:456216"/>
        <dbReference type="EC" id="6.3.2.17"/>
    </reaction>
</comment>
<comment type="cofactor">
    <cofactor evidence="2">
        <name>a monovalent cation</name>
        <dbReference type="ChEBI" id="CHEBI:60242"/>
    </cofactor>
    <text evidence="2">A monovalent cation.</text>
</comment>
<comment type="pathway">
    <text evidence="2">Cofactor biosynthesis; tetrahydrofolylpolyglutamate biosynthesis.</text>
</comment>
<comment type="subcellular location">
    <subcellularLocation>
        <location evidence="2">Mitochondrion inner membrane</location>
    </subcellularLocation>
    <subcellularLocation>
        <location evidence="2">Mitochondrion matrix</location>
    </subcellularLocation>
    <subcellularLocation>
        <location evidence="2">Cytoplasm</location>
    </subcellularLocation>
</comment>
<comment type="similarity">
    <text evidence="2">Belongs to the folylpolyglutamate synthase family.</text>
</comment>
<name>FOLE_YEAS1</name>
<protein>
    <recommendedName>
        <fullName evidence="2 3">Folylpolyglutamate synthase</fullName>
        <ecNumber evidence="2">6.3.2.17</ecNumber>
    </recommendedName>
    <alternativeName>
        <fullName evidence="2">Folylpoly-gamma-glutamate synthetase</fullName>
        <shortName evidence="2">FPGS</shortName>
    </alternativeName>
    <alternativeName>
        <fullName evidence="2">Tetrahydrofolylpolyglutamate synthase</fullName>
        <shortName evidence="2">Tetrahydrofolate synthase</shortName>
    </alternativeName>
</protein>
<evidence type="ECO:0000250" key="1">
    <source>
        <dbReference type="UniProtKB" id="P08192"/>
    </source>
</evidence>
<evidence type="ECO:0000250" key="2">
    <source>
        <dbReference type="UniProtKB" id="Q08645"/>
    </source>
</evidence>
<evidence type="ECO:0000312" key="3">
    <source>
        <dbReference type="EMBL" id="EDV10813.1"/>
    </source>
</evidence>
<dbReference type="EC" id="6.3.2.17" evidence="2"/>
<dbReference type="EMBL" id="CH408045">
    <property type="protein sequence ID" value="EDV10813.1"/>
    <property type="molecule type" value="Genomic_DNA"/>
</dbReference>
<dbReference type="SMR" id="B3LJR0"/>
<dbReference type="HOGENOM" id="CLU_015869_0_1_1"/>
<dbReference type="OrthoDB" id="19167at4893"/>
<dbReference type="UniPathway" id="UPA00850"/>
<dbReference type="Proteomes" id="UP000008335">
    <property type="component" value="Unassembled WGS sequence"/>
</dbReference>
<dbReference type="GO" id="GO:0005829">
    <property type="term" value="C:cytosol"/>
    <property type="evidence" value="ECO:0007669"/>
    <property type="project" value="TreeGrafter"/>
</dbReference>
<dbReference type="GO" id="GO:0005743">
    <property type="term" value="C:mitochondrial inner membrane"/>
    <property type="evidence" value="ECO:0007669"/>
    <property type="project" value="UniProtKB-SubCell"/>
</dbReference>
<dbReference type="GO" id="GO:0005759">
    <property type="term" value="C:mitochondrial matrix"/>
    <property type="evidence" value="ECO:0007669"/>
    <property type="project" value="UniProtKB-SubCell"/>
</dbReference>
<dbReference type="GO" id="GO:0005524">
    <property type="term" value="F:ATP binding"/>
    <property type="evidence" value="ECO:0007669"/>
    <property type="project" value="UniProtKB-KW"/>
</dbReference>
<dbReference type="GO" id="GO:0046872">
    <property type="term" value="F:metal ion binding"/>
    <property type="evidence" value="ECO:0007669"/>
    <property type="project" value="UniProtKB-KW"/>
</dbReference>
<dbReference type="GO" id="GO:0004326">
    <property type="term" value="F:tetrahydrofolylpolyglutamate synthase activity"/>
    <property type="evidence" value="ECO:0007669"/>
    <property type="project" value="UniProtKB-EC"/>
</dbReference>
<dbReference type="GO" id="GO:0006730">
    <property type="term" value="P:one-carbon metabolic process"/>
    <property type="evidence" value="ECO:0007669"/>
    <property type="project" value="UniProtKB-KW"/>
</dbReference>
<dbReference type="FunFam" id="3.40.1190.10:FF:000009">
    <property type="entry name" value="Folylpolyglutamate synthase"/>
    <property type="match status" value="1"/>
</dbReference>
<dbReference type="FunFam" id="3.90.190.20:FF:000009">
    <property type="entry name" value="Folylpolyglutamate synthase"/>
    <property type="match status" value="1"/>
</dbReference>
<dbReference type="Gene3D" id="3.90.190.20">
    <property type="entry name" value="Mur ligase, C-terminal domain"/>
    <property type="match status" value="1"/>
</dbReference>
<dbReference type="Gene3D" id="3.40.1190.10">
    <property type="entry name" value="Mur-like, catalytic domain"/>
    <property type="match status" value="1"/>
</dbReference>
<dbReference type="InterPro" id="IPR001645">
    <property type="entry name" value="Folylpolyglutamate_synth"/>
</dbReference>
<dbReference type="InterPro" id="IPR018109">
    <property type="entry name" value="Folylpolyglutamate_synth_CS"/>
</dbReference>
<dbReference type="InterPro" id="IPR023600">
    <property type="entry name" value="Folylpolyglutamate_synth_euk"/>
</dbReference>
<dbReference type="InterPro" id="IPR036565">
    <property type="entry name" value="Mur-like_cat_sf"/>
</dbReference>
<dbReference type="InterPro" id="IPR036615">
    <property type="entry name" value="Mur_ligase_C_dom_sf"/>
</dbReference>
<dbReference type="NCBIfam" id="TIGR01499">
    <property type="entry name" value="folC"/>
    <property type="match status" value="1"/>
</dbReference>
<dbReference type="PANTHER" id="PTHR11136:SF5">
    <property type="entry name" value="FOLYLPOLYGLUTAMATE SYNTHASE, MITOCHONDRIAL"/>
    <property type="match status" value="1"/>
</dbReference>
<dbReference type="PANTHER" id="PTHR11136">
    <property type="entry name" value="FOLYLPOLYGLUTAMATE SYNTHASE-RELATED"/>
    <property type="match status" value="1"/>
</dbReference>
<dbReference type="PIRSF" id="PIRSF038895">
    <property type="entry name" value="FPGS"/>
    <property type="match status" value="1"/>
</dbReference>
<dbReference type="SUPFAM" id="SSF53623">
    <property type="entry name" value="MurD-like peptide ligases, catalytic domain"/>
    <property type="match status" value="1"/>
</dbReference>
<dbReference type="SUPFAM" id="SSF53244">
    <property type="entry name" value="MurD-like peptide ligases, peptide-binding domain"/>
    <property type="match status" value="1"/>
</dbReference>
<dbReference type="PROSITE" id="PS01011">
    <property type="entry name" value="FOLYLPOLYGLU_SYNT_1"/>
    <property type="match status" value="1"/>
</dbReference>
<dbReference type="PROSITE" id="PS01012">
    <property type="entry name" value="FOLYLPOLYGLU_SYNT_2"/>
    <property type="match status" value="1"/>
</dbReference>
<feature type="chain" id="PRO_0000414494" description="Folylpolyglutamate synthase">
    <location>
        <begin position="1"/>
        <end position="548"/>
    </location>
</feature>
<feature type="binding site" evidence="1">
    <location>
        <begin position="130"/>
        <end position="133"/>
    </location>
    <ligand>
        <name>ATP</name>
        <dbReference type="ChEBI" id="CHEBI:30616"/>
    </ligand>
</feature>
<feature type="binding site" evidence="1">
    <location>
        <position position="157"/>
    </location>
    <ligand>
        <name>Mg(2+)</name>
        <dbReference type="ChEBI" id="CHEBI:18420"/>
        <label>1</label>
    </ligand>
</feature>
<feature type="binding site" evidence="1">
    <location>
        <position position="234"/>
    </location>
    <ligand>
        <name>Mg(2+)</name>
        <dbReference type="ChEBI" id="CHEBI:18420"/>
        <label>1</label>
    </ligand>
</feature>
<feature type="binding site" evidence="1">
    <location>
        <position position="262"/>
    </location>
    <ligand>
        <name>Mg(2+)</name>
        <dbReference type="ChEBI" id="CHEBI:18420"/>
        <label>2</label>
    </ligand>
</feature>
<feature type="binding site" evidence="1">
    <location>
        <position position="382"/>
    </location>
    <ligand>
        <name>ATP</name>
        <dbReference type="ChEBI" id="CHEBI:30616"/>
    </ligand>
</feature>
<feature type="binding site" evidence="1">
    <location>
        <position position="396"/>
    </location>
    <ligand>
        <name>ATP</name>
        <dbReference type="ChEBI" id="CHEBI:30616"/>
    </ligand>
</feature>
<sequence length="548" mass="62151">MHKGKKNYPNLITSFRMNLKKIILNHDRFSHPERWKTNALLRFTFVYIKFLFDLMIIKNPLRMVGKTYRDAVTALNSLQSNYANIMAIRQTGDRKNTMTLLEMHEWSRRIGYSASDFNKLNIVHITGTKGKGSTAAFTSSILGQYKEQLPRIGLYTSPHLKSVRERIRINGEPISEEKFAKYFFEVWDRLDSTTSSLDKFPHMIPGSKPGYFKFLTLLSFHTFIQEDCKSCVYEVGVGGELDSTNIIEKPIVCGVTLLGIDHTFMLGDTIEEIAWNKGGIFKSGAPAFTVEKQPPQGLTILKERAEERKTTLTEVPPFKQLENVKLGIAGEFQKSNASLAVMLASEILHTSNILEEKIKCSSNASIPEKFIIGLQNTKWEGRCQVLEKGKNVWYIDGAHTKDSMVAASTWFRDMVRLSKRKKILLFNQQSRDANALVNNLYSSVSPEITFDDVIFTTNVTWKSGSYSADLVSMNTSQEDVEKLKVQESLVKNWNKIDDNRAKTHVTASIEEANELIETLYDEPADIFVTGSLHLVGGLLVVFDRIDVK</sequence>
<accession>B3LJR0</accession>
<proteinExistence type="inferred from homology"/>